<reference key="1">
    <citation type="journal article" date="1997" name="Science">
        <title>The complete genome sequence of Escherichia coli K-12.</title>
        <authorList>
            <person name="Blattner F.R."/>
            <person name="Plunkett G. III"/>
            <person name="Bloch C.A."/>
            <person name="Perna N.T."/>
            <person name="Burland V."/>
            <person name="Riley M."/>
            <person name="Collado-Vides J."/>
            <person name="Glasner J.D."/>
            <person name="Rode C.K."/>
            <person name="Mayhew G.F."/>
            <person name="Gregor J."/>
            <person name="Davis N.W."/>
            <person name="Kirkpatrick H.A."/>
            <person name="Goeden M.A."/>
            <person name="Rose D.J."/>
            <person name="Mau B."/>
            <person name="Shao Y."/>
        </authorList>
    </citation>
    <scope>NUCLEOTIDE SEQUENCE [LARGE SCALE GENOMIC DNA]</scope>
    <source>
        <strain>K12 / MG1655 / ATCC 47076</strain>
    </source>
</reference>
<reference key="2">
    <citation type="journal article" date="2006" name="Mol. Syst. Biol.">
        <title>Highly accurate genome sequences of Escherichia coli K-12 strains MG1655 and W3110.</title>
        <authorList>
            <person name="Hayashi K."/>
            <person name="Morooka N."/>
            <person name="Yamamoto Y."/>
            <person name="Fujita K."/>
            <person name="Isono K."/>
            <person name="Choi S."/>
            <person name="Ohtsubo E."/>
            <person name="Baba T."/>
            <person name="Wanner B.L."/>
            <person name="Mori H."/>
            <person name="Horiuchi T."/>
        </authorList>
    </citation>
    <scope>NUCLEOTIDE SEQUENCE [LARGE SCALE GENOMIC DNA]</scope>
    <source>
        <strain>K12 / W3110 / ATCC 27325 / DSM 5911</strain>
    </source>
</reference>
<reference evidence="5" key="3">
    <citation type="journal article" date="2009" name="J. Biol. Inorg. Chem.">
        <title>Insight into the protein and solvent contributions to the reduction potentials of [4Fe-4S]2+/+ clusters: crystal structures of the Allochromatium vinosum ferredoxin variants C57A and V13G and the homologous Escherichia coli ferredoxin.</title>
        <authorList>
            <person name="Saridakis E."/>
            <person name="Giastas P."/>
            <person name="Efthymiou G."/>
            <person name="Thoma V."/>
            <person name="Moulis J.M."/>
            <person name="Kyritsis P."/>
            <person name="Mavridis I.M."/>
        </authorList>
    </citation>
    <scope>X-RAY CRYSTALLOGRAPHY (1.65 ANGSTROMS) OF 2-86 IN COMPLEX WITH IRON-SULFUR (4FE-4S)</scope>
    <scope>COFACTOR</scope>
    <scope>BIOPHYSICOCHEMICAL PROPERTIES</scope>
</reference>
<gene>
    <name type="primary">yfhL</name>
    <name type="ordered locus">b2562</name>
    <name type="ordered locus">JW2546</name>
</gene>
<dbReference type="EMBL" id="U36841">
    <property type="protein sequence ID" value="AAA79824.1"/>
    <property type="molecule type" value="Genomic_DNA"/>
</dbReference>
<dbReference type="EMBL" id="U00096">
    <property type="protein sequence ID" value="AAC75615.1"/>
    <property type="molecule type" value="Genomic_DNA"/>
</dbReference>
<dbReference type="EMBL" id="AP009048">
    <property type="protein sequence ID" value="BAE76738.1"/>
    <property type="molecule type" value="Genomic_DNA"/>
</dbReference>
<dbReference type="PIR" id="A65034">
    <property type="entry name" value="A65034"/>
</dbReference>
<dbReference type="RefSeq" id="NP_417057.1">
    <property type="nucleotide sequence ID" value="NC_000913.3"/>
</dbReference>
<dbReference type="RefSeq" id="WP_001196283.1">
    <property type="nucleotide sequence ID" value="NZ_STEB01000011.1"/>
</dbReference>
<dbReference type="PDB" id="2ZVS">
    <property type="method" value="X-ray"/>
    <property type="resolution" value="1.65 A"/>
    <property type="chains" value="A/B/C=2-86"/>
</dbReference>
<dbReference type="PDBsum" id="2ZVS"/>
<dbReference type="SMR" id="P52102"/>
<dbReference type="BioGRID" id="4260595">
    <property type="interactions" value="18"/>
</dbReference>
<dbReference type="BioGRID" id="851370">
    <property type="interactions" value="5"/>
</dbReference>
<dbReference type="FunCoup" id="P52102">
    <property type="interactions" value="122"/>
</dbReference>
<dbReference type="IntAct" id="P52102">
    <property type="interactions" value="12"/>
</dbReference>
<dbReference type="STRING" id="511145.b2562"/>
<dbReference type="PaxDb" id="511145-b2562"/>
<dbReference type="EnsemblBacteria" id="AAC75615">
    <property type="protein sequence ID" value="AAC75615"/>
    <property type="gene ID" value="b2562"/>
</dbReference>
<dbReference type="GeneID" id="75206255"/>
<dbReference type="GeneID" id="947031"/>
<dbReference type="KEGG" id="ecj:JW2546"/>
<dbReference type="KEGG" id="eco:b2562"/>
<dbReference type="KEGG" id="ecoc:C3026_14180"/>
<dbReference type="PATRIC" id="fig|1411691.4.peg.4172"/>
<dbReference type="EchoBASE" id="EB3006"/>
<dbReference type="eggNOG" id="COG1145">
    <property type="taxonomic scope" value="Bacteria"/>
</dbReference>
<dbReference type="HOGENOM" id="CLU_139698_11_0_6"/>
<dbReference type="InParanoid" id="P52102"/>
<dbReference type="OMA" id="VDCCVDD"/>
<dbReference type="OrthoDB" id="9803397at2"/>
<dbReference type="PhylomeDB" id="P52102"/>
<dbReference type="BioCyc" id="EcoCyc:G7346-MONOMER"/>
<dbReference type="EvolutionaryTrace" id="P52102"/>
<dbReference type="PRO" id="PR:P52102"/>
<dbReference type="Proteomes" id="UP000000625">
    <property type="component" value="Chromosome"/>
</dbReference>
<dbReference type="GO" id="GO:0005737">
    <property type="term" value="C:cytoplasm"/>
    <property type="evidence" value="ECO:0000318"/>
    <property type="project" value="GO_Central"/>
</dbReference>
<dbReference type="GO" id="GO:0051539">
    <property type="term" value="F:4 iron, 4 sulfur cluster binding"/>
    <property type="evidence" value="ECO:0007669"/>
    <property type="project" value="UniProtKB-KW"/>
</dbReference>
<dbReference type="GO" id="GO:0046872">
    <property type="term" value="F:metal ion binding"/>
    <property type="evidence" value="ECO:0007669"/>
    <property type="project" value="UniProtKB-KW"/>
</dbReference>
<dbReference type="GO" id="GO:0002097">
    <property type="term" value="P:tRNA wobble base modification"/>
    <property type="evidence" value="ECO:0000315"/>
    <property type="project" value="EcoCyc"/>
</dbReference>
<dbReference type="FunFam" id="3.30.70.20:FF:000004">
    <property type="entry name" value="4Fe-4S ferredoxin"/>
    <property type="match status" value="1"/>
</dbReference>
<dbReference type="Gene3D" id="3.30.70.20">
    <property type="match status" value="1"/>
</dbReference>
<dbReference type="InterPro" id="IPR017896">
    <property type="entry name" value="4Fe4S_Fe-S-bd"/>
</dbReference>
<dbReference type="InterPro" id="IPR017900">
    <property type="entry name" value="4Fe4S_Fe_S_CS"/>
</dbReference>
<dbReference type="InterPro" id="IPR050157">
    <property type="entry name" value="PSI_iron-sulfur_center"/>
</dbReference>
<dbReference type="InterPro" id="IPR047927">
    <property type="entry name" value="YfhL-like"/>
</dbReference>
<dbReference type="NCBIfam" id="NF033683">
    <property type="entry name" value="di_4Fe-4S_YfhL"/>
    <property type="match status" value="1"/>
</dbReference>
<dbReference type="PANTHER" id="PTHR24960:SF79">
    <property type="entry name" value="PHOTOSYSTEM I IRON-SULFUR CENTER"/>
    <property type="match status" value="1"/>
</dbReference>
<dbReference type="PANTHER" id="PTHR24960">
    <property type="entry name" value="PHOTOSYSTEM I IRON-SULFUR CENTER-RELATED"/>
    <property type="match status" value="1"/>
</dbReference>
<dbReference type="Pfam" id="PF12838">
    <property type="entry name" value="Fer4_7"/>
    <property type="match status" value="1"/>
</dbReference>
<dbReference type="SUPFAM" id="SSF54862">
    <property type="entry name" value="4Fe-4S ferredoxins"/>
    <property type="match status" value="1"/>
</dbReference>
<dbReference type="PROSITE" id="PS00198">
    <property type="entry name" value="4FE4S_FER_1"/>
    <property type="match status" value="1"/>
</dbReference>
<dbReference type="PROSITE" id="PS51379">
    <property type="entry name" value="4FE4S_FER_2"/>
    <property type="match status" value="2"/>
</dbReference>
<organism>
    <name type="scientific">Escherichia coli (strain K12)</name>
    <dbReference type="NCBI Taxonomy" id="83333"/>
    <lineage>
        <taxon>Bacteria</taxon>
        <taxon>Pseudomonadati</taxon>
        <taxon>Pseudomonadota</taxon>
        <taxon>Gammaproteobacteria</taxon>
        <taxon>Enterobacterales</taxon>
        <taxon>Enterobacteriaceae</taxon>
        <taxon>Escherichia</taxon>
    </lineage>
</organism>
<sequence>MALLITKKCINCDMCEPECPNEAISMGDHIYEINSDKCTECVGHYETPTCQKVCPIPNTIVKDPAHVETEEQLWDKFVLMHHADKI</sequence>
<comment type="function">
    <text evidence="4">Ferredoxins are iron-sulfur proteins that transfer electrons in a wide variety of metabolic reactions.</text>
</comment>
<comment type="cofactor">
    <cofactor evidence="2">
        <name>[4Fe-4S] cluster</name>
        <dbReference type="ChEBI" id="CHEBI:49883"/>
    </cofactor>
    <text evidence="2">Binds 2 [4Fe-4S] cluster.</text>
</comment>
<comment type="biophysicochemical properties">
    <redoxPotential>
        <text evidence="2">E(0) is -675 mV for the cluster 1, and -418 mV for the cluster 2.</text>
    </redoxPotential>
</comment>
<name>YFHL_ECOLI</name>
<protein>
    <recommendedName>
        <fullName evidence="4">Ferredoxin YfhL</fullName>
    </recommendedName>
    <alternativeName>
        <fullName evidence="3">EcFd</fullName>
    </alternativeName>
</protein>
<proteinExistence type="evidence at protein level"/>
<evidence type="ECO:0000255" key="1">
    <source>
        <dbReference type="PROSITE-ProRule" id="PRU00711"/>
    </source>
</evidence>
<evidence type="ECO:0000269" key="2">
    <source>
    </source>
</evidence>
<evidence type="ECO:0000303" key="3">
    <source>
    </source>
</evidence>
<evidence type="ECO:0000305" key="4"/>
<evidence type="ECO:0007744" key="5">
    <source>
        <dbReference type="PDB" id="2ZVS"/>
    </source>
</evidence>
<evidence type="ECO:0007829" key="6">
    <source>
        <dbReference type="PDB" id="2ZVS"/>
    </source>
</evidence>
<accession>P52102</accession>
<accession>Q2MAG8</accession>
<feature type="chain" id="PRO_0000159300" description="Ferredoxin YfhL">
    <location>
        <begin position="1"/>
        <end position="86"/>
    </location>
</feature>
<feature type="domain" description="4Fe-4S ferredoxin-type 1" evidence="1">
    <location>
        <begin position="1"/>
        <end position="29"/>
    </location>
</feature>
<feature type="domain" description="4Fe-4S ferredoxin-type 2" evidence="1">
    <location>
        <begin position="31"/>
        <end position="65"/>
    </location>
</feature>
<feature type="binding site" evidence="2 5">
    <location>
        <position position="9"/>
    </location>
    <ligand>
        <name>[4Fe-4S] cluster</name>
        <dbReference type="ChEBI" id="CHEBI:49883"/>
        <label>1</label>
    </ligand>
</feature>
<feature type="binding site" evidence="2 5">
    <location>
        <position position="12"/>
    </location>
    <ligand>
        <name>[4Fe-4S] cluster</name>
        <dbReference type="ChEBI" id="CHEBI:49883"/>
        <label>1</label>
    </ligand>
</feature>
<feature type="binding site" evidence="2 5">
    <location>
        <position position="15"/>
    </location>
    <ligand>
        <name>[4Fe-4S] cluster</name>
        <dbReference type="ChEBI" id="CHEBI:49883"/>
        <label>1</label>
    </ligand>
</feature>
<feature type="binding site" evidence="2 5">
    <location>
        <position position="19"/>
    </location>
    <ligand>
        <name>[4Fe-4S] cluster</name>
        <dbReference type="ChEBI" id="CHEBI:49883"/>
        <label>2</label>
    </ligand>
</feature>
<feature type="binding site" evidence="2 5">
    <location>
        <position position="38"/>
    </location>
    <ligand>
        <name>[4Fe-4S] cluster</name>
        <dbReference type="ChEBI" id="CHEBI:49883"/>
        <label>2</label>
    </ligand>
</feature>
<feature type="binding site" evidence="2 5">
    <location>
        <position position="41"/>
    </location>
    <ligand>
        <name>[4Fe-4S] cluster</name>
        <dbReference type="ChEBI" id="CHEBI:49883"/>
        <label>2</label>
    </ligand>
</feature>
<feature type="binding site" evidence="2 5">
    <location>
        <position position="50"/>
    </location>
    <ligand>
        <name>[4Fe-4S] cluster</name>
        <dbReference type="ChEBI" id="CHEBI:49883"/>
        <label>2</label>
    </ligand>
</feature>
<feature type="binding site" evidence="2 5">
    <location>
        <position position="54"/>
    </location>
    <ligand>
        <name>[4Fe-4S] cluster</name>
        <dbReference type="ChEBI" id="CHEBI:49883"/>
        <label>1</label>
    </ligand>
</feature>
<feature type="strand" evidence="6">
    <location>
        <begin position="3"/>
        <end position="5"/>
    </location>
</feature>
<feature type="turn" evidence="6">
    <location>
        <begin position="14"/>
        <end position="18"/>
    </location>
</feature>
<feature type="strand" evidence="6">
    <location>
        <begin position="28"/>
        <end position="30"/>
    </location>
</feature>
<feature type="helix" evidence="6">
    <location>
        <begin position="35"/>
        <end position="37"/>
    </location>
</feature>
<feature type="turn" evidence="6">
    <location>
        <begin position="40"/>
        <end position="44"/>
    </location>
</feature>
<feature type="helix" evidence="6">
    <location>
        <begin position="49"/>
        <end position="53"/>
    </location>
</feature>
<feature type="strand" evidence="6">
    <location>
        <begin position="59"/>
        <end position="61"/>
    </location>
</feature>
<feature type="helix" evidence="6">
    <location>
        <begin position="69"/>
        <end position="80"/>
    </location>
</feature>
<keyword id="KW-0002">3D-structure</keyword>
<keyword id="KW-0004">4Fe-4S</keyword>
<keyword id="KW-0249">Electron transport</keyword>
<keyword id="KW-0408">Iron</keyword>
<keyword id="KW-0411">Iron-sulfur</keyword>
<keyword id="KW-0479">Metal-binding</keyword>
<keyword id="KW-1185">Reference proteome</keyword>
<keyword id="KW-0677">Repeat</keyword>
<keyword id="KW-0813">Transport</keyword>